<sequence>MKTFLRHQLERYAQRLGELDFLLSREDIMSDMAQYRTISREHAEITQIAGRYERYKQREADIAGAAEMLEDPDMAEMAREEIAAAQAELVQLEEELQRLLLPKDPDDARNAFLEIRAGTGGDESALFAGDLLRMYTRYCERAGWRCEVVSESESELGGYKEVVIRIAGNDVFGRLRFESGGHRVQRVPATETQGRIHTSACTVAVLAEPDETVAVQINPADLRIDTYRASGAGGQHINKTDSAVRITHIPTGIVAECQDDRSQHRNKAKALQVLSARIQEKDRSERAAKDAAMRKGLIGSGDRSDRIRTYNFPQGRLTDHRINLTLYKLQAIMEGDLGDVLDALRAAREAEQLAELESSLPA</sequence>
<name>RF1_VARPS</name>
<dbReference type="EMBL" id="CP001635">
    <property type="protein sequence ID" value="ACS20819.1"/>
    <property type="molecule type" value="Genomic_DNA"/>
</dbReference>
<dbReference type="SMR" id="C5CXW3"/>
<dbReference type="STRING" id="543728.Vapar_4206"/>
<dbReference type="KEGG" id="vap:Vapar_4206"/>
<dbReference type="eggNOG" id="COG0216">
    <property type="taxonomic scope" value="Bacteria"/>
</dbReference>
<dbReference type="HOGENOM" id="CLU_036856_0_1_4"/>
<dbReference type="OrthoDB" id="9806673at2"/>
<dbReference type="GO" id="GO:0005737">
    <property type="term" value="C:cytoplasm"/>
    <property type="evidence" value="ECO:0007669"/>
    <property type="project" value="UniProtKB-SubCell"/>
</dbReference>
<dbReference type="GO" id="GO:0016149">
    <property type="term" value="F:translation release factor activity, codon specific"/>
    <property type="evidence" value="ECO:0007669"/>
    <property type="project" value="UniProtKB-UniRule"/>
</dbReference>
<dbReference type="FunFam" id="3.30.160.20:FF:000004">
    <property type="entry name" value="Peptide chain release factor 1"/>
    <property type="match status" value="1"/>
</dbReference>
<dbReference type="FunFam" id="3.30.70.1660:FF:000002">
    <property type="entry name" value="Peptide chain release factor 1"/>
    <property type="match status" value="1"/>
</dbReference>
<dbReference type="FunFam" id="3.30.70.1660:FF:000004">
    <property type="entry name" value="Peptide chain release factor 1"/>
    <property type="match status" value="1"/>
</dbReference>
<dbReference type="Gene3D" id="3.30.160.20">
    <property type="match status" value="1"/>
</dbReference>
<dbReference type="Gene3D" id="3.30.70.1660">
    <property type="match status" value="1"/>
</dbReference>
<dbReference type="Gene3D" id="6.10.140.1950">
    <property type="match status" value="1"/>
</dbReference>
<dbReference type="HAMAP" id="MF_00093">
    <property type="entry name" value="Rel_fac_1"/>
    <property type="match status" value="1"/>
</dbReference>
<dbReference type="InterPro" id="IPR005139">
    <property type="entry name" value="PCRF"/>
</dbReference>
<dbReference type="InterPro" id="IPR000352">
    <property type="entry name" value="Pep_chain_release_fac_I"/>
</dbReference>
<dbReference type="InterPro" id="IPR045853">
    <property type="entry name" value="Pep_chain_release_fac_I_sf"/>
</dbReference>
<dbReference type="InterPro" id="IPR050057">
    <property type="entry name" value="Prokaryotic/Mito_RF"/>
</dbReference>
<dbReference type="InterPro" id="IPR004373">
    <property type="entry name" value="RF-1"/>
</dbReference>
<dbReference type="NCBIfam" id="TIGR00019">
    <property type="entry name" value="prfA"/>
    <property type="match status" value="1"/>
</dbReference>
<dbReference type="NCBIfam" id="NF001859">
    <property type="entry name" value="PRK00591.1"/>
    <property type="match status" value="1"/>
</dbReference>
<dbReference type="PANTHER" id="PTHR43804">
    <property type="entry name" value="LD18447P"/>
    <property type="match status" value="1"/>
</dbReference>
<dbReference type="PANTHER" id="PTHR43804:SF7">
    <property type="entry name" value="LD18447P"/>
    <property type="match status" value="1"/>
</dbReference>
<dbReference type="Pfam" id="PF03462">
    <property type="entry name" value="PCRF"/>
    <property type="match status" value="1"/>
</dbReference>
<dbReference type="Pfam" id="PF00472">
    <property type="entry name" value="RF-1"/>
    <property type="match status" value="1"/>
</dbReference>
<dbReference type="SMART" id="SM00937">
    <property type="entry name" value="PCRF"/>
    <property type="match status" value="1"/>
</dbReference>
<dbReference type="SUPFAM" id="SSF75620">
    <property type="entry name" value="Release factor"/>
    <property type="match status" value="1"/>
</dbReference>
<dbReference type="PROSITE" id="PS00745">
    <property type="entry name" value="RF_PROK_I"/>
    <property type="match status" value="1"/>
</dbReference>
<evidence type="ECO:0000255" key="1">
    <source>
        <dbReference type="HAMAP-Rule" id="MF_00093"/>
    </source>
</evidence>
<protein>
    <recommendedName>
        <fullName evidence="1">Peptide chain release factor 1</fullName>
        <shortName evidence="1">RF-1</shortName>
    </recommendedName>
</protein>
<reference key="1">
    <citation type="journal article" date="2011" name="J. Bacteriol.">
        <title>Complete genome sequence of the metabolically versatile plant growth-promoting endophyte, Variovorax paradoxus S110.</title>
        <authorList>
            <person name="Han J.I."/>
            <person name="Choi H.K."/>
            <person name="Lee S.W."/>
            <person name="Orwin P.M."/>
            <person name="Kim J."/>
            <person name="Laroe S.L."/>
            <person name="Kim T.G."/>
            <person name="O'Neil J."/>
            <person name="Leadbetter J.R."/>
            <person name="Lee S.Y."/>
            <person name="Hur C.G."/>
            <person name="Spain J.C."/>
            <person name="Ovchinnikova G."/>
            <person name="Goodwin L."/>
            <person name="Han C."/>
        </authorList>
    </citation>
    <scope>NUCLEOTIDE SEQUENCE [LARGE SCALE GENOMIC DNA]</scope>
    <source>
        <strain>S110</strain>
    </source>
</reference>
<organism>
    <name type="scientific">Variovorax paradoxus (strain S110)</name>
    <dbReference type="NCBI Taxonomy" id="543728"/>
    <lineage>
        <taxon>Bacteria</taxon>
        <taxon>Pseudomonadati</taxon>
        <taxon>Pseudomonadota</taxon>
        <taxon>Betaproteobacteria</taxon>
        <taxon>Burkholderiales</taxon>
        <taxon>Comamonadaceae</taxon>
        <taxon>Variovorax</taxon>
    </lineage>
</organism>
<proteinExistence type="inferred from homology"/>
<feature type="chain" id="PRO_1000202706" description="Peptide chain release factor 1">
    <location>
        <begin position="1"/>
        <end position="362"/>
    </location>
</feature>
<feature type="modified residue" description="N5-methylglutamine" evidence="1">
    <location>
        <position position="235"/>
    </location>
</feature>
<gene>
    <name evidence="1" type="primary">prfA</name>
    <name type="ordered locus">Vapar_4206</name>
</gene>
<keyword id="KW-0963">Cytoplasm</keyword>
<keyword id="KW-0488">Methylation</keyword>
<keyword id="KW-0648">Protein biosynthesis</keyword>
<accession>C5CXW3</accession>
<comment type="function">
    <text evidence="1">Peptide chain release factor 1 directs the termination of translation in response to the peptide chain termination codons UAG and UAA.</text>
</comment>
<comment type="subcellular location">
    <subcellularLocation>
        <location evidence="1">Cytoplasm</location>
    </subcellularLocation>
</comment>
<comment type="PTM">
    <text evidence="1">Methylated by PrmC. Methylation increases the termination efficiency of RF1.</text>
</comment>
<comment type="similarity">
    <text evidence="1">Belongs to the prokaryotic/mitochondrial release factor family.</text>
</comment>